<protein>
    <recommendedName>
        <fullName>RNA/RNP complex-1-interacting phosphatase</fullName>
        <ecNumber>3.1.3.-</ecNumber>
    </recommendedName>
    <alternativeName>
        <fullName>Dual specificity protein phosphatase 11</fullName>
    </alternativeName>
    <alternativeName>
        <fullName>Phosphatase that interacts with RNA/RNP complex 1</fullName>
    </alternativeName>
</protein>
<dbReference type="EC" id="3.1.3.-"/>
<dbReference type="EMBL" id="BT021021">
    <property type="protein sequence ID" value="AAX09038.1"/>
    <property type="molecule type" value="mRNA"/>
</dbReference>
<dbReference type="EMBL" id="BC105553">
    <property type="protein sequence ID" value="AAI05554.1"/>
    <property type="molecule type" value="mRNA"/>
</dbReference>
<dbReference type="RefSeq" id="NP_001014875.1">
    <property type="nucleotide sequence ID" value="NM_001014875.1"/>
</dbReference>
<dbReference type="SMR" id="Q5E999"/>
<dbReference type="FunCoup" id="Q5E999">
    <property type="interactions" value="2134"/>
</dbReference>
<dbReference type="STRING" id="9913.ENSBTAP00000044476"/>
<dbReference type="PaxDb" id="9913-ENSBTAP00000044476"/>
<dbReference type="GeneID" id="508944"/>
<dbReference type="KEGG" id="bta:508944"/>
<dbReference type="CTD" id="8446"/>
<dbReference type="eggNOG" id="KOG2386">
    <property type="taxonomic scope" value="Eukaryota"/>
</dbReference>
<dbReference type="InParanoid" id="Q5E999"/>
<dbReference type="OrthoDB" id="428974at2759"/>
<dbReference type="Proteomes" id="UP000009136">
    <property type="component" value="Unplaced"/>
</dbReference>
<dbReference type="GO" id="GO:0016607">
    <property type="term" value="C:nuclear speck"/>
    <property type="evidence" value="ECO:0000250"/>
    <property type="project" value="UniProtKB"/>
</dbReference>
<dbReference type="GO" id="GO:0016791">
    <property type="term" value="F:phosphatase activity"/>
    <property type="evidence" value="ECO:0000250"/>
    <property type="project" value="UniProtKB"/>
</dbReference>
<dbReference type="GO" id="GO:0004721">
    <property type="term" value="F:phosphoprotein phosphatase activity"/>
    <property type="evidence" value="ECO:0007669"/>
    <property type="project" value="UniProtKB-KW"/>
</dbReference>
<dbReference type="GO" id="GO:0004651">
    <property type="term" value="F:polynucleotide 5'-phosphatase activity"/>
    <property type="evidence" value="ECO:0000250"/>
    <property type="project" value="UniProtKB"/>
</dbReference>
<dbReference type="GO" id="GO:0003723">
    <property type="term" value="F:RNA binding"/>
    <property type="evidence" value="ECO:0007669"/>
    <property type="project" value="UniProtKB-KW"/>
</dbReference>
<dbReference type="CDD" id="cd17665">
    <property type="entry name" value="DSP_DUSP11"/>
    <property type="match status" value="1"/>
</dbReference>
<dbReference type="FunFam" id="3.90.190.10:FF:000064">
    <property type="entry name" value="RNA/RNP complex-1-interacting phosphatase homolog"/>
    <property type="match status" value="1"/>
</dbReference>
<dbReference type="Gene3D" id="3.90.190.10">
    <property type="entry name" value="Protein tyrosine phosphatase superfamily"/>
    <property type="match status" value="1"/>
</dbReference>
<dbReference type="InterPro" id="IPR000340">
    <property type="entry name" value="Dual-sp_phosphatase_cat-dom"/>
</dbReference>
<dbReference type="InterPro" id="IPR051029">
    <property type="entry name" value="mRNA_Capping_Enz/RNA_Phosphat"/>
</dbReference>
<dbReference type="InterPro" id="IPR029021">
    <property type="entry name" value="Prot-tyrosine_phosphatase-like"/>
</dbReference>
<dbReference type="InterPro" id="IPR016130">
    <property type="entry name" value="Tyr_Pase_AS"/>
</dbReference>
<dbReference type="InterPro" id="IPR000387">
    <property type="entry name" value="Tyr_Pase_dom"/>
</dbReference>
<dbReference type="InterPro" id="IPR020422">
    <property type="entry name" value="TYR_PHOSPHATASE_DUAL_dom"/>
</dbReference>
<dbReference type="PANTHER" id="PTHR10367">
    <property type="entry name" value="MRNA-CAPPING ENZYME"/>
    <property type="match status" value="1"/>
</dbReference>
<dbReference type="PANTHER" id="PTHR10367:SF18">
    <property type="entry name" value="RNA_RNP COMPLEX-1-INTERACTING PHOSPHATASE"/>
    <property type="match status" value="1"/>
</dbReference>
<dbReference type="Pfam" id="PF00782">
    <property type="entry name" value="DSPc"/>
    <property type="match status" value="1"/>
</dbReference>
<dbReference type="SMART" id="SM00195">
    <property type="entry name" value="DSPc"/>
    <property type="match status" value="1"/>
</dbReference>
<dbReference type="SUPFAM" id="SSF52799">
    <property type="entry name" value="(Phosphotyrosine protein) phosphatases II"/>
    <property type="match status" value="1"/>
</dbReference>
<dbReference type="PROSITE" id="PS00383">
    <property type="entry name" value="TYR_PHOSPHATASE_1"/>
    <property type="match status" value="1"/>
</dbReference>
<dbReference type="PROSITE" id="PS50056">
    <property type="entry name" value="TYR_PHOSPHATASE_2"/>
    <property type="match status" value="1"/>
</dbReference>
<dbReference type="PROSITE" id="PS50054">
    <property type="entry name" value="TYR_PHOSPHATASE_DUAL"/>
    <property type="match status" value="1"/>
</dbReference>
<name>DUS11_BOVIN</name>
<reference key="1">
    <citation type="journal article" date="2005" name="BMC Genomics">
        <title>Characterization of 954 bovine full-CDS cDNA sequences.</title>
        <authorList>
            <person name="Harhay G.P."/>
            <person name="Sonstegard T.S."/>
            <person name="Keele J.W."/>
            <person name="Heaton M.P."/>
            <person name="Clawson M.L."/>
            <person name="Snelling W.M."/>
            <person name="Wiedmann R.T."/>
            <person name="Van Tassell C.P."/>
            <person name="Smith T.P.L."/>
        </authorList>
    </citation>
    <scope>NUCLEOTIDE SEQUENCE [LARGE SCALE MRNA]</scope>
</reference>
<reference key="2">
    <citation type="submission" date="2005-09" db="EMBL/GenBank/DDBJ databases">
        <authorList>
            <consortium name="NIH - Mammalian Gene Collection (MGC) project"/>
        </authorList>
    </citation>
    <scope>NUCLEOTIDE SEQUENCE [LARGE SCALE MRNA]</scope>
    <source>
        <strain>Hereford</strain>
        <tissue>Ascending colon</tissue>
    </source>
</reference>
<accession>Q5E999</accession>
<accession>Q2KJ27</accession>
<comment type="function">
    <text evidence="1">Possesses RNA 5'-triphosphatase and diphosphatase activities, but displays a poor protein-tyrosine phosphatase activity. In addition, has phosphatase activity with ATP, ADP and O-methylfluorescein phosphate (in vitro). Binds to RNA. May participate in nuclear mRNA metabolism.</text>
</comment>
<comment type="subunit">
    <text evidence="1">Monomer. May interact with SFRS7 and SFRS9/SRP30C.</text>
</comment>
<comment type="subcellular location">
    <subcellularLocation>
        <location evidence="1">Nucleus</location>
    </subcellularLocation>
    <subcellularLocation>
        <location evidence="1">Nucleus speckle</location>
    </subcellularLocation>
</comment>
<comment type="similarity">
    <text evidence="4">Belongs to the protein-tyrosine phosphatase family. Non-receptor class dual specificity subfamily.</text>
</comment>
<evidence type="ECO:0000250" key="1">
    <source>
        <dbReference type="UniProtKB" id="O75319"/>
    </source>
</evidence>
<evidence type="ECO:0000255" key="2"/>
<evidence type="ECO:0000255" key="3">
    <source>
        <dbReference type="PROSITE-ProRule" id="PRU00160"/>
    </source>
</evidence>
<evidence type="ECO:0000305" key="4"/>
<feature type="chain" id="PRO_0000094815" description="RNA/RNP complex-1-interacting phosphatase">
    <location>
        <begin position="1"/>
        <end position="331"/>
    </location>
</feature>
<feature type="domain" description="Tyrosine-protein phosphatase" evidence="3">
    <location>
        <begin position="61"/>
        <end position="208"/>
    </location>
</feature>
<feature type="active site" description="Phosphocysteine intermediate" evidence="3">
    <location>
        <position position="152"/>
    </location>
</feature>
<feature type="active site" description="Proton donor/acceptor" evidence="2">
    <location>
        <position position="158"/>
    </location>
</feature>
<feature type="binding site" evidence="1">
    <location>
        <begin position="153"/>
        <end position="158"/>
    </location>
    <ligand>
        <name>substrate</name>
    </ligand>
</feature>
<organism>
    <name type="scientific">Bos taurus</name>
    <name type="common">Bovine</name>
    <dbReference type="NCBI Taxonomy" id="9913"/>
    <lineage>
        <taxon>Eukaryota</taxon>
        <taxon>Metazoa</taxon>
        <taxon>Chordata</taxon>
        <taxon>Craniata</taxon>
        <taxon>Vertebrata</taxon>
        <taxon>Euteleostomi</taxon>
        <taxon>Mammalia</taxon>
        <taxon>Eutheria</taxon>
        <taxon>Laurasiatheria</taxon>
        <taxon>Artiodactyla</taxon>
        <taxon>Ruminantia</taxon>
        <taxon>Pecora</taxon>
        <taxon>Bovidae</taxon>
        <taxon>Bovinae</taxon>
        <taxon>Bos</taxon>
    </lineage>
</organism>
<keyword id="KW-0378">Hydrolase</keyword>
<keyword id="KW-0539">Nucleus</keyword>
<keyword id="KW-0904">Protein phosphatase</keyword>
<keyword id="KW-1185">Reference proteome</keyword>
<keyword id="KW-0694">RNA-binding</keyword>
<sequence>MSQWHHVGGHWGQDRVFSGYSSAKKKGGNHIPERWKDYLPVGQRMPGTRFIAFKVPLKKSFEKHLAPEECFSPLDLFNKIQEQNEELGLIIDLTYTRRYYKPEELPENFPYLKIYTVGHQVPDDDTIFKFKNAVNGFLRENKDNDRLIGVHCTHGVNRTGYLICRYLIDVEGMRPDDAIELFSRCRGHCLERQNYIDDLRNGPIRKNWDSSVSRTRGFEDSTHMMEPVFTATKPVNRRPKHNIHQTQGYPEPRHFHTWTQDLQQSERKFSQNWNIYQRCHVPPPGPPGEDYFQRRYSWNVKPSAGQGGPNKRFSPGSYYRVPYSAYYRWTK</sequence>
<proteinExistence type="evidence at transcript level"/>
<gene>
    <name type="primary">DUSP11</name>
    <name type="synonym">PIR1</name>
</gene>